<gene>
    <name type="ORF">DDB_G0277453</name>
</gene>
<proteinExistence type="inferred from homology"/>
<name>Y9256_DICDI</name>
<keyword id="KW-1185">Reference proteome</keyword>
<keyword id="KW-0964">Secreted</keyword>
<keyword id="KW-0732">Signal</keyword>
<feature type="signal peptide" evidence="1">
    <location>
        <begin position="1"/>
        <end position="16"/>
    </location>
</feature>
<feature type="chain" id="PRO_0000348181" description="Uncharacterized protein DDB_G0277453">
    <location>
        <begin position="17"/>
        <end position="81"/>
    </location>
</feature>
<feature type="region of interest" description="Disordered" evidence="2">
    <location>
        <begin position="55"/>
        <end position="81"/>
    </location>
</feature>
<feature type="compositionally biased region" description="Basic and acidic residues" evidence="2">
    <location>
        <begin position="57"/>
        <end position="71"/>
    </location>
</feature>
<feature type="compositionally biased region" description="Basic residues" evidence="2">
    <location>
        <begin position="72"/>
        <end position="81"/>
    </location>
</feature>
<organism>
    <name type="scientific">Dictyostelium discoideum</name>
    <name type="common">Social amoeba</name>
    <dbReference type="NCBI Taxonomy" id="44689"/>
    <lineage>
        <taxon>Eukaryota</taxon>
        <taxon>Amoebozoa</taxon>
        <taxon>Evosea</taxon>
        <taxon>Eumycetozoa</taxon>
        <taxon>Dictyostelia</taxon>
        <taxon>Dictyosteliales</taxon>
        <taxon>Dictyosteliaceae</taxon>
        <taxon>Dictyostelium</taxon>
    </lineage>
</organism>
<reference key="1">
    <citation type="journal article" date="2002" name="Nature">
        <title>Sequence and analysis of chromosome 2 of Dictyostelium discoideum.</title>
        <authorList>
            <person name="Gloeckner G."/>
            <person name="Eichinger L."/>
            <person name="Szafranski K."/>
            <person name="Pachebat J.A."/>
            <person name="Bankier A.T."/>
            <person name="Dear P.H."/>
            <person name="Lehmann R."/>
            <person name="Baumgart C."/>
            <person name="Parra G."/>
            <person name="Abril J.F."/>
            <person name="Guigo R."/>
            <person name="Kumpf K."/>
            <person name="Tunggal B."/>
            <person name="Cox E.C."/>
            <person name="Quail M.A."/>
            <person name="Platzer M."/>
            <person name="Rosenthal A."/>
            <person name="Noegel A.A."/>
        </authorList>
    </citation>
    <scope>NUCLEOTIDE SEQUENCE [LARGE SCALE GENOMIC DNA]</scope>
    <source>
        <strain>AX4</strain>
    </source>
</reference>
<reference key="2">
    <citation type="journal article" date="2005" name="Nature">
        <title>The genome of the social amoeba Dictyostelium discoideum.</title>
        <authorList>
            <person name="Eichinger L."/>
            <person name="Pachebat J.A."/>
            <person name="Gloeckner G."/>
            <person name="Rajandream M.A."/>
            <person name="Sucgang R."/>
            <person name="Berriman M."/>
            <person name="Song J."/>
            <person name="Olsen R."/>
            <person name="Szafranski K."/>
            <person name="Xu Q."/>
            <person name="Tunggal B."/>
            <person name="Kummerfeld S."/>
            <person name="Madera M."/>
            <person name="Konfortov B.A."/>
            <person name="Rivero F."/>
            <person name="Bankier A.T."/>
            <person name="Lehmann R."/>
            <person name="Hamlin N."/>
            <person name="Davies R."/>
            <person name="Gaudet P."/>
            <person name="Fey P."/>
            <person name="Pilcher K."/>
            <person name="Chen G."/>
            <person name="Saunders D."/>
            <person name="Sodergren E.J."/>
            <person name="Davis P."/>
            <person name="Kerhornou A."/>
            <person name="Nie X."/>
            <person name="Hall N."/>
            <person name="Anjard C."/>
            <person name="Hemphill L."/>
            <person name="Bason N."/>
            <person name="Farbrother P."/>
            <person name="Desany B."/>
            <person name="Just E."/>
            <person name="Morio T."/>
            <person name="Rost R."/>
            <person name="Churcher C.M."/>
            <person name="Cooper J."/>
            <person name="Haydock S."/>
            <person name="van Driessche N."/>
            <person name="Cronin A."/>
            <person name="Goodhead I."/>
            <person name="Muzny D.M."/>
            <person name="Mourier T."/>
            <person name="Pain A."/>
            <person name="Lu M."/>
            <person name="Harper D."/>
            <person name="Lindsay R."/>
            <person name="Hauser H."/>
            <person name="James K.D."/>
            <person name="Quiles M."/>
            <person name="Madan Babu M."/>
            <person name="Saito T."/>
            <person name="Buchrieser C."/>
            <person name="Wardroper A."/>
            <person name="Felder M."/>
            <person name="Thangavelu M."/>
            <person name="Johnson D."/>
            <person name="Knights A."/>
            <person name="Loulseged H."/>
            <person name="Mungall K.L."/>
            <person name="Oliver K."/>
            <person name="Price C."/>
            <person name="Quail M.A."/>
            <person name="Urushihara H."/>
            <person name="Hernandez J."/>
            <person name="Rabbinowitsch E."/>
            <person name="Steffen D."/>
            <person name="Sanders M."/>
            <person name="Ma J."/>
            <person name="Kohara Y."/>
            <person name="Sharp S."/>
            <person name="Simmonds M.N."/>
            <person name="Spiegler S."/>
            <person name="Tivey A."/>
            <person name="Sugano S."/>
            <person name="White B."/>
            <person name="Walker D."/>
            <person name="Woodward J.R."/>
            <person name="Winckler T."/>
            <person name="Tanaka Y."/>
            <person name="Shaulsky G."/>
            <person name="Schleicher M."/>
            <person name="Weinstock G.M."/>
            <person name="Rosenthal A."/>
            <person name="Cox E.C."/>
            <person name="Chisholm R.L."/>
            <person name="Gibbs R.A."/>
            <person name="Loomis W.F."/>
            <person name="Platzer M."/>
            <person name="Kay R.R."/>
            <person name="Williams J.G."/>
            <person name="Dear P.H."/>
            <person name="Noegel A.A."/>
            <person name="Barrell B.G."/>
            <person name="Kuspa A."/>
        </authorList>
    </citation>
    <scope>NUCLEOTIDE SEQUENCE [LARGE SCALE GENOMIC DNA]</scope>
    <source>
        <strain>AX4</strain>
    </source>
</reference>
<dbReference type="EMBL" id="AAFI02000020">
    <property type="protein sequence ID" value="EAL68689.1"/>
    <property type="molecule type" value="Genomic_DNA"/>
</dbReference>
<dbReference type="RefSeq" id="XP_642654.1">
    <property type="nucleotide sequence ID" value="XM_637562.1"/>
</dbReference>
<dbReference type="SMR" id="Q8MN55"/>
<dbReference type="FunCoup" id="Q8MN55">
    <property type="interactions" value="435"/>
</dbReference>
<dbReference type="PaxDb" id="44689-DDB0169256"/>
<dbReference type="EnsemblProtists" id="EAL68689">
    <property type="protein sequence ID" value="EAL68689"/>
    <property type="gene ID" value="DDB_G0277453"/>
</dbReference>
<dbReference type="GeneID" id="8621070"/>
<dbReference type="KEGG" id="ddi:DDB_G0277453"/>
<dbReference type="dictyBase" id="DDB_G0277453"/>
<dbReference type="VEuPathDB" id="AmoebaDB:DDB_G0277453"/>
<dbReference type="eggNOG" id="ENOG502RII4">
    <property type="taxonomic scope" value="Eukaryota"/>
</dbReference>
<dbReference type="HOGENOM" id="CLU_2578865_0_0_1"/>
<dbReference type="InParanoid" id="Q8MN55"/>
<dbReference type="OMA" id="PFYRMAV"/>
<dbReference type="PRO" id="PR:Q8MN55"/>
<dbReference type="Proteomes" id="UP000002195">
    <property type="component" value="Chromosome 2"/>
</dbReference>
<dbReference type="GO" id="GO:0005576">
    <property type="term" value="C:extracellular region"/>
    <property type="evidence" value="ECO:0007669"/>
    <property type="project" value="UniProtKB-SubCell"/>
</dbReference>
<accession>Q8MN55</accession>
<accession>Q54ZI8</accession>
<comment type="subcellular location">
    <subcellularLocation>
        <location evidence="3">Secreted</location>
    </subcellularLocation>
</comment>
<evidence type="ECO:0000255" key="1"/>
<evidence type="ECO:0000256" key="2">
    <source>
        <dbReference type="SAM" id="MobiDB-lite"/>
    </source>
</evidence>
<evidence type="ECO:0000305" key="3"/>
<sequence>MNRLTFYGLCLSGAVGMGLLVGSPICRPVFGELLGANRDQEKREKEIKILMAGGTIDPHHNHHDDHHDSHGHGHGKIKGHH</sequence>
<protein>
    <recommendedName>
        <fullName>Uncharacterized protein DDB_G0277453</fullName>
    </recommendedName>
</protein>